<keyword id="KW-0025">Alternative splicing</keyword>
<keyword id="KW-1185">Reference proteome</keyword>
<feature type="chain" id="PRO_0000322988" description="Protein CASC2, isoform 3">
    <location>
        <begin position="1"/>
        <end position="102"/>
    </location>
</feature>
<feature type="sequence variant" id="VAR_039469" description="In some patients with endometrial cancer." evidence="1">
    <original>P</original>
    <variation>S</variation>
    <location>
        <position position="8"/>
    </location>
</feature>
<gene>
    <name type="primary">CASC2</name>
    <name type="synonym">C10orf5</name>
</gene>
<proteinExistence type="evidence at transcript level"/>
<dbReference type="EMBL" id="AY226450">
    <property type="protein sequence ID" value="AAP48615.1"/>
    <property type="molecule type" value="mRNA"/>
</dbReference>
<dbReference type="EMBL" id="CH471066">
    <property type="protein sequence ID" value="EAW49422.1"/>
    <property type="molecule type" value="Genomic_DNA"/>
</dbReference>
<dbReference type="EMBL" id="CH471066">
    <property type="protein sequence ID" value="EAW49420.1"/>
    <property type="molecule type" value="Genomic_DNA"/>
</dbReference>
<dbReference type="iPTMnet" id="Q6XLA1"/>
<dbReference type="BioMuta" id="HGNC:22933"/>
<dbReference type="AGR" id="HGNC:22933"/>
<dbReference type="GeneCards" id="CASC2"/>
<dbReference type="HGNC" id="HGNC:22933">
    <property type="gene designation" value="CASC2"/>
</dbReference>
<dbReference type="MIM" id="608598">
    <property type="type" value="gene"/>
</dbReference>
<dbReference type="neXtProt" id="NX_Q6XLA1"/>
<dbReference type="InParanoid" id="Q6XLA1"/>
<dbReference type="PAN-GO" id="Q6XLA1">
    <property type="GO annotations" value="0 GO annotations based on evolutionary models"/>
</dbReference>
<dbReference type="PathwayCommons" id="Q6XLA1"/>
<dbReference type="ChiTaRS" id="CASC2">
    <property type="organism name" value="human"/>
</dbReference>
<dbReference type="Pharos" id="Q6XLA1">
    <property type="development level" value="Tbio"/>
</dbReference>
<dbReference type="Proteomes" id="UP000005640">
    <property type="component" value="Unplaced"/>
</dbReference>
<dbReference type="RNAct" id="Q6XLA1">
    <property type="molecule type" value="protein"/>
</dbReference>
<evidence type="ECO:0000269" key="1">
    <source>
    </source>
</evidence>
<evidence type="ECO:0000269" key="2">
    <source>
    </source>
</evidence>
<protein>
    <recommendedName>
        <fullName>Protein CASC2, isoform 3</fullName>
    </recommendedName>
    <alternativeName>
        <fullName>Cancer susceptibility candidate gene 2 protein, isoform 3</fullName>
    </alternativeName>
</protein>
<name>CSC2A_HUMAN</name>
<organism>
    <name type="scientific">Homo sapiens</name>
    <name type="common">Human</name>
    <dbReference type="NCBI Taxonomy" id="9606"/>
    <lineage>
        <taxon>Eukaryota</taxon>
        <taxon>Metazoa</taxon>
        <taxon>Chordata</taxon>
        <taxon>Craniata</taxon>
        <taxon>Vertebrata</taxon>
        <taxon>Euteleostomi</taxon>
        <taxon>Mammalia</taxon>
        <taxon>Eutheria</taxon>
        <taxon>Euarchontoglires</taxon>
        <taxon>Primates</taxon>
        <taxon>Haplorrhini</taxon>
        <taxon>Catarrhini</taxon>
        <taxon>Hominidae</taxon>
        <taxon>Homo</taxon>
    </lineage>
</organism>
<comment type="function">
    <text evidence="1 2">May act as a potential tumor suppressor.</text>
</comment>
<comment type="alternative products">
    <event type="alternative splicing"/>
    <isoform>
        <id>Q6XLA1-1</id>
        <name>3</name>
        <name>CASC2a</name>
        <sequence type="displayed"/>
    </isoform>
    <isoform>
        <id>Q8IU53-1</id>
        <name>1</name>
        <name>CASC2c</name>
        <sequence type="external"/>
    </isoform>
    <isoform>
        <id>Q8IU53-2</id>
        <name>2</name>
        <name>CASC2b</name>
        <sequence type="external"/>
    </isoform>
</comment>
<comment type="tissue specificity">
    <text evidence="1">Expressed in normal and neoplastic endometrial tissues.</text>
</comment>
<comment type="induction">
    <text evidence="1 2">Down-regulated in endometrial and colorectal tumor samples.</text>
</comment>
<sequence length="102" mass="11902">MTQEKMYPHLFSERCANQHQHRTAEEKKYVSEKQLIHWRCEEPSAHHNSIDIKRMKHFGSALRLRQTFHLDTADHPCVITMNPALPWKLEGSNSTSTLPLPA</sequence>
<reference key="1">
    <citation type="journal article" date="2004" name="Hum. Mutat.">
        <title>Identification of a novel candidate gene, CASC2, in a region of common allelic loss at chromosome 10q26 in human endometrial cancer.</title>
        <authorList>
            <person name="Baldinu P."/>
            <person name="Cossu A."/>
            <person name="Manca A."/>
            <person name="Satta M.P."/>
            <person name="Sini M.C."/>
            <person name="Rozzo C."/>
            <person name="Dessole S."/>
            <person name="Cherchi P."/>
            <person name="Gianfrancesco F."/>
            <person name="Pintus A."/>
            <person name="Carboni A."/>
            <person name="Deiana A."/>
            <person name="Tanda F."/>
            <person name="Palmieri G."/>
        </authorList>
    </citation>
    <scope>NUCLEOTIDE SEQUENCE [MRNA] (ISOFORM 3)</scope>
    <scope>FUNCTION</scope>
    <scope>TISSUE SPECIFICITY</scope>
    <scope>INDUCTION</scope>
    <scope>VARIANT SER-8</scope>
</reference>
<reference key="2">
    <citation type="submission" date="2005-09" db="EMBL/GenBank/DDBJ databases">
        <authorList>
            <person name="Mural R.J."/>
            <person name="Istrail S."/>
            <person name="Sutton G.G."/>
            <person name="Florea L."/>
            <person name="Halpern A.L."/>
            <person name="Mobarry C.M."/>
            <person name="Lippert R."/>
            <person name="Walenz B."/>
            <person name="Shatkay H."/>
            <person name="Dew I."/>
            <person name="Miller J.R."/>
            <person name="Flanigan M.J."/>
            <person name="Edwards N.J."/>
            <person name="Bolanos R."/>
            <person name="Fasulo D."/>
            <person name="Halldorsson B.V."/>
            <person name="Hannenhalli S."/>
            <person name="Turner R."/>
            <person name="Yooseph S."/>
            <person name="Lu F."/>
            <person name="Nusskern D.R."/>
            <person name="Shue B.C."/>
            <person name="Zheng X.H."/>
            <person name="Zhong F."/>
            <person name="Delcher A.L."/>
            <person name="Huson D.H."/>
            <person name="Kravitz S.A."/>
            <person name="Mouchard L."/>
            <person name="Reinert K."/>
            <person name="Remington K.A."/>
            <person name="Clark A.G."/>
            <person name="Waterman M.S."/>
            <person name="Eichler E.E."/>
            <person name="Adams M.D."/>
            <person name="Hunkapiller M.W."/>
            <person name="Myers E.W."/>
            <person name="Venter J.C."/>
        </authorList>
    </citation>
    <scope>NUCLEOTIDE SEQUENCE [LARGE SCALE GENOMIC DNA]</scope>
</reference>
<reference key="3">
    <citation type="journal article" date="2007" name="Anticancer Res.">
        <title>CASC2a gene is down-regulated in endometrial cancer.</title>
        <authorList>
            <person name="Baldinu P."/>
            <person name="Cossu A."/>
            <person name="Manca A."/>
            <person name="Satta M.P."/>
            <person name="Sini M.C."/>
            <person name="Palomba G."/>
            <person name="Dessole S."/>
            <person name="Cherchi P."/>
            <person name="Mara L."/>
            <person name="Tanda F."/>
            <person name="Palmieri G."/>
        </authorList>
    </citation>
    <scope>FUNCTION</scope>
    <scope>INDUCTION</scope>
</reference>
<accession>Q6XLA1</accession>
<accession>D3DRC5</accession>